<proteinExistence type="evidence at protein level"/>
<comment type="function">
    <text evidence="1">The UvrABC repair system catalyzes the recognition and processing of DNA lesions. UvrC both incises the 5' and 3' sides of the lesion. The N-terminal half is responsible for the 3' incision and the C-terminal half is responsible for the 5' incision.</text>
</comment>
<comment type="subunit">
    <text evidence="1">Interacts with UvrB in an incision complex.</text>
</comment>
<comment type="subcellular location">
    <subcellularLocation>
        <location evidence="1">Cytoplasm</location>
    </subcellularLocation>
</comment>
<comment type="similarity">
    <text evidence="1">Belongs to the UvrC family.</text>
</comment>
<organism>
    <name type="scientific">Geobacillus kaustophilus (strain HTA426)</name>
    <dbReference type="NCBI Taxonomy" id="235909"/>
    <lineage>
        <taxon>Bacteria</taxon>
        <taxon>Bacillati</taxon>
        <taxon>Bacillota</taxon>
        <taxon>Bacilli</taxon>
        <taxon>Bacillales</taxon>
        <taxon>Anoxybacillaceae</taxon>
        <taxon>Geobacillus</taxon>
        <taxon>Geobacillus thermoleovorans group</taxon>
    </lineage>
</organism>
<protein>
    <recommendedName>
        <fullName evidence="1">UvrABC system protein C</fullName>
        <shortName evidence="1">Protein UvrC</shortName>
    </recommendedName>
    <alternativeName>
        <fullName evidence="1">Excinuclease ABC subunit C</fullName>
    </alternativeName>
</protein>
<accession>Q5KWH6</accession>
<name>UVRC_GEOKA</name>
<reference key="1">
    <citation type="journal article" date="2004" name="Nucleic Acids Res.">
        <title>Thermoadaptation trait revealed by the genome sequence of thermophilic Geobacillus kaustophilus.</title>
        <authorList>
            <person name="Takami H."/>
            <person name="Takaki Y."/>
            <person name="Chee G.-J."/>
            <person name="Nishi S."/>
            <person name="Shimamura S."/>
            <person name="Suzuki H."/>
            <person name="Matsui S."/>
            <person name="Uchiyama I."/>
        </authorList>
    </citation>
    <scope>NUCLEOTIDE SEQUENCE [LARGE SCALE GENOMIC DNA]</scope>
    <source>
        <strain>HTA426</strain>
    </source>
</reference>
<feature type="chain" id="PRO_0000227432" description="UvrABC system protein C">
    <location>
        <begin position="1"/>
        <end position="590"/>
    </location>
</feature>
<feature type="domain" description="GIY-YIG" evidence="1">
    <location>
        <begin position="14"/>
        <end position="91"/>
    </location>
</feature>
<feature type="domain" description="UVR" evidence="1">
    <location>
        <begin position="196"/>
        <end position="231"/>
    </location>
</feature>
<feature type="helix" evidence="2">
    <location>
        <begin position="3"/>
        <end position="10"/>
    </location>
</feature>
<feature type="strand" evidence="2">
    <location>
        <begin position="17"/>
        <end position="22"/>
    </location>
</feature>
<feature type="strand" evidence="2">
    <location>
        <begin position="28"/>
        <end position="35"/>
    </location>
</feature>
<feature type="helix" evidence="2">
    <location>
        <begin position="37"/>
        <end position="42"/>
    </location>
</feature>
<feature type="helix" evidence="2">
    <location>
        <begin position="43"/>
        <end position="45"/>
    </location>
</feature>
<feature type="helix" evidence="2">
    <location>
        <begin position="51"/>
        <end position="59"/>
    </location>
</feature>
<feature type="strand" evidence="2">
    <location>
        <begin position="61"/>
        <end position="67"/>
    </location>
</feature>
<feature type="helix" evidence="2">
    <location>
        <begin position="71"/>
        <end position="85"/>
    </location>
</feature>
<feature type="helix" evidence="2">
    <location>
        <begin position="88"/>
        <end position="92"/>
    </location>
</feature>
<feature type="helix" evidence="3">
    <location>
        <begin position="369"/>
        <end position="373"/>
    </location>
</feature>
<feature type="strand" evidence="3">
    <location>
        <begin position="379"/>
        <end position="393"/>
    </location>
</feature>
<feature type="strand" evidence="3">
    <location>
        <begin position="395"/>
        <end position="402"/>
    </location>
</feature>
<feature type="helix" evidence="3">
    <location>
        <begin position="408"/>
        <end position="410"/>
    </location>
</feature>
<feature type="strand" evidence="3">
    <location>
        <begin position="412"/>
        <end position="415"/>
    </location>
</feature>
<feature type="helix" evidence="3">
    <location>
        <begin position="424"/>
        <end position="442"/>
    </location>
</feature>
<feature type="strand" evidence="3">
    <location>
        <begin position="448"/>
        <end position="454"/>
    </location>
</feature>
<feature type="helix" evidence="3">
    <location>
        <begin position="456"/>
        <end position="468"/>
    </location>
</feature>
<feature type="strand" evidence="3">
    <location>
        <begin position="476"/>
        <end position="478"/>
    </location>
</feature>
<feature type="strand" evidence="3">
    <location>
        <begin position="490"/>
        <end position="492"/>
    </location>
</feature>
<feature type="turn" evidence="3">
    <location>
        <begin position="493"/>
        <end position="496"/>
    </location>
</feature>
<feature type="strand" evidence="3">
    <location>
        <begin position="497"/>
        <end position="499"/>
    </location>
</feature>
<feature type="helix" evidence="3">
    <location>
        <begin position="506"/>
        <end position="521"/>
    </location>
</feature>
<dbReference type="EMBL" id="BA000043">
    <property type="protein sequence ID" value="BAD76960.1"/>
    <property type="molecule type" value="Genomic_DNA"/>
</dbReference>
<dbReference type="RefSeq" id="WP_011232149.1">
    <property type="nucleotide sequence ID" value="NC_006510.1"/>
</dbReference>
<dbReference type="PDB" id="1YD6">
    <property type="method" value="X-ray"/>
    <property type="resolution" value="2.00 A"/>
    <property type="chains" value="A/B/C/D=1-99"/>
</dbReference>
<dbReference type="PDB" id="3C65">
    <property type="method" value="X-ray"/>
    <property type="resolution" value="1.90 A"/>
    <property type="chains" value="A=369-590"/>
</dbReference>
<dbReference type="PDBsum" id="1YD6"/>
<dbReference type="PDBsum" id="3C65"/>
<dbReference type="SMR" id="Q5KWH6"/>
<dbReference type="STRING" id="235909.GK2675"/>
<dbReference type="GeneID" id="32064577"/>
<dbReference type="KEGG" id="gka:GK2675"/>
<dbReference type="eggNOG" id="COG0322">
    <property type="taxonomic scope" value="Bacteria"/>
</dbReference>
<dbReference type="HOGENOM" id="CLU_014841_3_2_9"/>
<dbReference type="EvolutionaryTrace" id="Q5KWH6"/>
<dbReference type="Proteomes" id="UP000001172">
    <property type="component" value="Chromosome"/>
</dbReference>
<dbReference type="GO" id="GO:0005737">
    <property type="term" value="C:cytoplasm"/>
    <property type="evidence" value="ECO:0007669"/>
    <property type="project" value="UniProtKB-SubCell"/>
</dbReference>
<dbReference type="GO" id="GO:0009380">
    <property type="term" value="C:excinuclease repair complex"/>
    <property type="evidence" value="ECO:0007669"/>
    <property type="project" value="InterPro"/>
</dbReference>
<dbReference type="GO" id="GO:0003677">
    <property type="term" value="F:DNA binding"/>
    <property type="evidence" value="ECO:0007669"/>
    <property type="project" value="UniProtKB-UniRule"/>
</dbReference>
<dbReference type="GO" id="GO:0009381">
    <property type="term" value="F:excinuclease ABC activity"/>
    <property type="evidence" value="ECO:0007669"/>
    <property type="project" value="UniProtKB-UniRule"/>
</dbReference>
<dbReference type="GO" id="GO:0006289">
    <property type="term" value="P:nucleotide-excision repair"/>
    <property type="evidence" value="ECO:0007669"/>
    <property type="project" value="UniProtKB-UniRule"/>
</dbReference>
<dbReference type="GO" id="GO:0009432">
    <property type="term" value="P:SOS response"/>
    <property type="evidence" value="ECO:0007669"/>
    <property type="project" value="UniProtKB-UniRule"/>
</dbReference>
<dbReference type="CDD" id="cd10434">
    <property type="entry name" value="GIY-YIG_UvrC_Cho"/>
    <property type="match status" value="1"/>
</dbReference>
<dbReference type="FunFam" id="1.10.150.20:FF:000005">
    <property type="entry name" value="UvrABC system protein C"/>
    <property type="match status" value="1"/>
</dbReference>
<dbReference type="FunFam" id="3.30.420.340:FF:000002">
    <property type="entry name" value="UvrABC system protein C"/>
    <property type="match status" value="1"/>
</dbReference>
<dbReference type="FunFam" id="3.40.1440.10:FF:000001">
    <property type="entry name" value="UvrABC system protein C"/>
    <property type="match status" value="1"/>
</dbReference>
<dbReference type="Gene3D" id="1.10.150.20">
    <property type="entry name" value="5' to 3' exonuclease, C-terminal subdomain"/>
    <property type="match status" value="1"/>
</dbReference>
<dbReference type="Gene3D" id="3.40.1440.10">
    <property type="entry name" value="GIY-YIG endonuclease"/>
    <property type="match status" value="1"/>
</dbReference>
<dbReference type="Gene3D" id="4.10.860.10">
    <property type="entry name" value="UVR domain"/>
    <property type="match status" value="1"/>
</dbReference>
<dbReference type="Gene3D" id="3.30.420.340">
    <property type="entry name" value="UvrC, RNAse H endonuclease domain"/>
    <property type="match status" value="1"/>
</dbReference>
<dbReference type="HAMAP" id="MF_00203">
    <property type="entry name" value="UvrC"/>
    <property type="match status" value="1"/>
</dbReference>
<dbReference type="InterPro" id="IPR000305">
    <property type="entry name" value="GIY-YIG_endonuc"/>
</dbReference>
<dbReference type="InterPro" id="IPR035901">
    <property type="entry name" value="GIY-YIG_endonuc_sf"/>
</dbReference>
<dbReference type="InterPro" id="IPR047296">
    <property type="entry name" value="GIY-YIG_UvrC_Cho"/>
</dbReference>
<dbReference type="InterPro" id="IPR010994">
    <property type="entry name" value="RuvA_2-like"/>
</dbReference>
<dbReference type="InterPro" id="IPR001943">
    <property type="entry name" value="UVR_dom"/>
</dbReference>
<dbReference type="InterPro" id="IPR036876">
    <property type="entry name" value="UVR_dom_sf"/>
</dbReference>
<dbReference type="InterPro" id="IPR050066">
    <property type="entry name" value="UvrABC_protein_C"/>
</dbReference>
<dbReference type="InterPro" id="IPR004791">
    <property type="entry name" value="UvrC"/>
</dbReference>
<dbReference type="InterPro" id="IPR001162">
    <property type="entry name" value="UvrC_RNase_H_dom"/>
</dbReference>
<dbReference type="InterPro" id="IPR038476">
    <property type="entry name" value="UvrC_RNase_H_dom_sf"/>
</dbReference>
<dbReference type="NCBIfam" id="NF001824">
    <property type="entry name" value="PRK00558.1-5"/>
    <property type="match status" value="1"/>
</dbReference>
<dbReference type="NCBIfam" id="TIGR00194">
    <property type="entry name" value="uvrC"/>
    <property type="match status" value="1"/>
</dbReference>
<dbReference type="PANTHER" id="PTHR30562:SF1">
    <property type="entry name" value="UVRABC SYSTEM PROTEIN C"/>
    <property type="match status" value="1"/>
</dbReference>
<dbReference type="PANTHER" id="PTHR30562">
    <property type="entry name" value="UVRC/OXIDOREDUCTASE"/>
    <property type="match status" value="1"/>
</dbReference>
<dbReference type="Pfam" id="PF01541">
    <property type="entry name" value="GIY-YIG"/>
    <property type="match status" value="1"/>
</dbReference>
<dbReference type="Pfam" id="PF14520">
    <property type="entry name" value="HHH_5"/>
    <property type="match status" value="1"/>
</dbReference>
<dbReference type="Pfam" id="PF02151">
    <property type="entry name" value="UVR"/>
    <property type="match status" value="1"/>
</dbReference>
<dbReference type="Pfam" id="PF22920">
    <property type="entry name" value="UvrC_RNaseH"/>
    <property type="match status" value="1"/>
</dbReference>
<dbReference type="Pfam" id="PF08459">
    <property type="entry name" value="UvrC_RNaseH_dom"/>
    <property type="match status" value="1"/>
</dbReference>
<dbReference type="SMART" id="SM00465">
    <property type="entry name" value="GIYc"/>
    <property type="match status" value="1"/>
</dbReference>
<dbReference type="SUPFAM" id="SSF46600">
    <property type="entry name" value="C-terminal UvrC-binding domain of UvrB"/>
    <property type="match status" value="1"/>
</dbReference>
<dbReference type="SUPFAM" id="SSF82771">
    <property type="entry name" value="GIY-YIG endonuclease"/>
    <property type="match status" value="1"/>
</dbReference>
<dbReference type="SUPFAM" id="SSF47781">
    <property type="entry name" value="RuvA domain 2-like"/>
    <property type="match status" value="1"/>
</dbReference>
<dbReference type="PROSITE" id="PS50164">
    <property type="entry name" value="GIY_YIG"/>
    <property type="match status" value="1"/>
</dbReference>
<dbReference type="PROSITE" id="PS50151">
    <property type="entry name" value="UVR"/>
    <property type="match status" value="1"/>
</dbReference>
<dbReference type="PROSITE" id="PS50165">
    <property type="entry name" value="UVRC"/>
    <property type="match status" value="1"/>
</dbReference>
<evidence type="ECO:0000255" key="1">
    <source>
        <dbReference type="HAMAP-Rule" id="MF_00203"/>
    </source>
</evidence>
<evidence type="ECO:0007829" key="2">
    <source>
        <dbReference type="PDB" id="1YD6"/>
    </source>
</evidence>
<evidence type="ECO:0007829" key="3">
    <source>
        <dbReference type="PDB" id="3C65"/>
    </source>
</evidence>
<keyword id="KW-0002">3D-structure</keyword>
<keyword id="KW-0963">Cytoplasm</keyword>
<keyword id="KW-0227">DNA damage</keyword>
<keyword id="KW-0228">DNA excision</keyword>
<keyword id="KW-0234">DNA repair</keyword>
<keyword id="KW-0267">Excision nuclease</keyword>
<keyword id="KW-1185">Reference proteome</keyword>
<keyword id="KW-0742">SOS response</keyword>
<gene>
    <name evidence="1" type="primary">uvrC</name>
    <name type="ordered locus">GK2675</name>
</gene>
<sequence>MNERLKEKLAVLPEQPGCYLMKDKHGTVIYVGKAKSLKARVRSYFTGTHDGKTQRLVEEIADFEYIVTSSNAEALILEMNLIKKHDPKYNVMLKDDKSYPFIKITAEKHPRLLITRKVKKDGGKYFGPYPNVQAANETKKLLDRLYPLRKCSTLPSRACLYYHMGQCLAPCVHPVSDEQNKAMVEQIVRFLNGGYEDVKRELAEKMHEAAETLEFERAKEYRDQIAAIEMTMEKQKMMLNDFIDRDVFGYAYDKGWMCVQVFFLRQGKLIERDVSIFPLYQDPDEEMLTFLGQFYAKAHHLKPKEVVLPSDIDGELARELLGVAVVQPKKGKKKELVELASKNAAIALKEKFYFIERDEERTIKAVERLGERLGIPAPRRIEAFDNSNIYGADPVSALVVFLDGKPAKKEYRKYKVKTVAGPNDYETMREVVRRRYTRVLKEGLPLPDLIIIDGGKGHLSAVRDVLENELGLDVPLAGLAKDEKHRTSELLAGDPPDVVPLDRQSQEFYLLQRIQDEVHRFAVMFHRKTRQKTMFHSVLDDIPGVGEKRKKALLNYFGSVKKMKEATVEELQRANIPRAVAEKIYEKLHE</sequence>